<protein>
    <recommendedName>
        <fullName evidence="1">Large ribosomal subunit protein uL30</fullName>
    </recommendedName>
    <alternativeName>
        <fullName evidence="2">50S ribosomal protein L30</fullName>
    </alternativeName>
</protein>
<proteinExistence type="inferred from homology"/>
<evidence type="ECO:0000255" key="1">
    <source>
        <dbReference type="HAMAP-Rule" id="MF_01371"/>
    </source>
</evidence>
<evidence type="ECO:0000305" key="2"/>
<organism>
    <name type="scientific">Nitrosopumilus maritimus (strain SCM1)</name>
    <dbReference type="NCBI Taxonomy" id="436308"/>
    <lineage>
        <taxon>Archaea</taxon>
        <taxon>Nitrososphaerota</taxon>
        <taxon>Nitrososphaeria</taxon>
        <taxon>Nitrosopumilales</taxon>
        <taxon>Nitrosopumilaceae</taxon>
        <taxon>Nitrosopumilus</taxon>
    </lineage>
</organism>
<dbReference type="EMBL" id="CP000866">
    <property type="protein sequence ID" value="ABX12296.1"/>
    <property type="molecule type" value="Genomic_DNA"/>
</dbReference>
<dbReference type="RefSeq" id="WP_012214783.1">
    <property type="nucleotide sequence ID" value="NC_010085.1"/>
</dbReference>
<dbReference type="SMR" id="A9A597"/>
<dbReference type="FunCoup" id="A9A597">
    <property type="interactions" value="170"/>
</dbReference>
<dbReference type="STRING" id="436308.Nmar_0400"/>
<dbReference type="EnsemblBacteria" id="ABX12296">
    <property type="protein sequence ID" value="ABX12296"/>
    <property type="gene ID" value="Nmar_0400"/>
</dbReference>
<dbReference type="GeneID" id="5773082"/>
<dbReference type="KEGG" id="nmr:Nmar_0400"/>
<dbReference type="eggNOG" id="arCOG04086">
    <property type="taxonomic scope" value="Archaea"/>
</dbReference>
<dbReference type="HOGENOM" id="CLU_055156_6_0_2"/>
<dbReference type="InParanoid" id="A9A597"/>
<dbReference type="OrthoDB" id="6379at2157"/>
<dbReference type="PhylomeDB" id="A9A597"/>
<dbReference type="Proteomes" id="UP000000792">
    <property type="component" value="Chromosome"/>
</dbReference>
<dbReference type="GO" id="GO:0022625">
    <property type="term" value="C:cytosolic large ribosomal subunit"/>
    <property type="evidence" value="ECO:0000318"/>
    <property type="project" value="GO_Central"/>
</dbReference>
<dbReference type="GO" id="GO:0003723">
    <property type="term" value="F:RNA binding"/>
    <property type="evidence" value="ECO:0000318"/>
    <property type="project" value="GO_Central"/>
</dbReference>
<dbReference type="GO" id="GO:0003735">
    <property type="term" value="F:structural constituent of ribosome"/>
    <property type="evidence" value="ECO:0000318"/>
    <property type="project" value="GO_Central"/>
</dbReference>
<dbReference type="GO" id="GO:0000463">
    <property type="term" value="P:maturation of LSU-rRNA from tricistronic rRNA transcript (SSU-rRNA, 5.8S rRNA, LSU-rRNA)"/>
    <property type="evidence" value="ECO:0000318"/>
    <property type="project" value="GO_Central"/>
</dbReference>
<dbReference type="GO" id="GO:0006412">
    <property type="term" value="P:translation"/>
    <property type="evidence" value="ECO:0007669"/>
    <property type="project" value="UniProtKB-UniRule"/>
</dbReference>
<dbReference type="CDD" id="cd01657">
    <property type="entry name" value="Ribosomal_L7_archeal_euk"/>
    <property type="match status" value="1"/>
</dbReference>
<dbReference type="Gene3D" id="1.10.15.30">
    <property type="match status" value="1"/>
</dbReference>
<dbReference type="Gene3D" id="3.30.1390.20">
    <property type="entry name" value="Ribosomal protein L30, ferredoxin-like fold domain"/>
    <property type="match status" value="1"/>
</dbReference>
<dbReference type="HAMAP" id="MF_01371_A">
    <property type="entry name" value="Ribosomal_uL30_A"/>
    <property type="match status" value="1"/>
</dbReference>
<dbReference type="InterPro" id="IPR036919">
    <property type="entry name" value="Ribo_uL30_ferredoxin-like_sf"/>
</dbReference>
<dbReference type="InterPro" id="IPR039699">
    <property type="entry name" value="Ribosomal_uL30"/>
</dbReference>
<dbReference type="InterPro" id="IPR005997">
    <property type="entry name" value="Ribosomal_uL30_arc"/>
</dbReference>
<dbReference type="InterPro" id="IPR035808">
    <property type="entry name" value="Ribosomal_uL30_euk_arc"/>
</dbReference>
<dbReference type="InterPro" id="IPR016082">
    <property type="entry name" value="Ribosomal_uL30_ferredoxin-like"/>
</dbReference>
<dbReference type="NCBIfam" id="NF004711">
    <property type="entry name" value="PRK06049.1"/>
    <property type="match status" value="1"/>
</dbReference>
<dbReference type="PANTHER" id="PTHR11524">
    <property type="entry name" value="60S RIBOSOMAL PROTEIN L7"/>
    <property type="match status" value="1"/>
</dbReference>
<dbReference type="PANTHER" id="PTHR11524:SF16">
    <property type="entry name" value="LARGE RIBOSOMAL SUBUNIT PROTEIN UL30"/>
    <property type="match status" value="1"/>
</dbReference>
<dbReference type="Pfam" id="PF00327">
    <property type="entry name" value="Ribosomal_L30"/>
    <property type="match status" value="1"/>
</dbReference>
<dbReference type="SUPFAM" id="SSF55129">
    <property type="entry name" value="Ribosomal protein L30p/L7e"/>
    <property type="match status" value="1"/>
</dbReference>
<comment type="subunit">
    <text evidence="1">Part of the 50S ribosomal subunit.</text>
</comment>
<comment type="similarity">
    <text evidence="1">Belongs to the universal ribosomal protein uL30 family.</text>
</comment>
<name>RL30_NITMS</name>
<reference key="1">
    <citation type="journal article" date="2010" name="Proc. Natl. Acad. Sci. U.S.A.">
        <title>Nitrosopumilus maritimus genome reveals unique mechanisms for nitrification and autotrophy in globally distributed marine crenarchaea.</title>
        <authorList>
            <person name="Walker C.B."/>
            <person name="de la Torre J.R."/>
            <person name="Klotz M.G."/>
            <person name="Urakawa H."/>
            <person name="Pinel N."/>
            <person name="Arp D.J."/>
            <person name="Brochier-Armanet C."/>
            <person name="Chain P.S."/>
            <person name="Chan P.P."/>
            <person name="Gollabgir A."/>
            <person name="Hemp J."/>
            <person name="Hugler M."/>
            <person name="Karr E.A."/>
            <person name="Konneke M."/>
            <person name="Shin M."/>
            <person name="Lawton T.J."/>
            <person name="Lowe T."/>
            <person name="Martens-Habbena W."/>
            <person name="Sayavedra-Soto L.A."/>
            <person name="Lang D."/>
            <person name="Sievert S.M."/>
            <person name="Rosenzweig A.C."/>
            <person name="Manning G."/>
            <person name="Stahl D.A."/>
        </authorList>
    </citation>
    <scope>NUCLEOTIDE SEQUENCE [LARGE SCALE GENOMIC DNA]</scope>
    <source>
        <strain>SCM1</strain>
    </source>
</reference>
<gene>
    <name evidence="1" type="primary">rpl30</name>
    <name type="ordered locus">Nmar_0400</name>
</gene>
<accession>A9A597</accession>
<feature type="chain" id="PRO_0000347170" description="Large ribosomal subunit protein uL30">
    <location>
        <begin position="1"/>
        <end position="155"/>
    </location>
</feature>
<sequence length="155" mass="17454">MANAVLVVRIKGQADCPYWASTTMDLLKLERKYRAVILPAKDNLLGMLKKVQHYVAWVDLDTELAQELIDKKARKSGYKKVTPEDLKELGYASSAELAAALTEGKTMLSKLKPLKPWFALAPPRHGFKRSTKRLYGQKGILGRNKELATIVRNMI</sequence>
<keyword id="KW-1185">Reference proteome</keyword>
<keyword id="KW-0687">Ribonucleoprotein</keyword>
<keyword id="KW-0689">Ribosomal protein</keyword>